<feature type="chain" id="PRO_0000416379" description="NAD(P)H-hydrate epimerase">
    <location>
        <begin position="1"/>
        <end position="220"/>
    </location>
</feature>
<feature type="domain" description="YjeF N-terminal" evidence="1">
    <location>
        <begin position="6"/>
        <end position="203"/>
    </location>
</feature>
<feature type="binding site" evidence="1">
    <location>
        <begin position="53"/>
        <end position="57"/>
    </location>
    <ligand>
        <name>(6S)-NADPHX</name>
        <dbReference type="ChEBI" id="CHEBI:64076"/>
    </ligand>
</feature>
<feature type="binding site" evidence="1">
    <location>
        <position position="54"/>
    </location>
    <ligand>
        <name>K(+)</name>
        <dbReference type="ChEBI" id="CHEBI:29103"/>
    </ligand>
</feature>
<feature type="binding site" evidence="1">
    <location>
        <position position="116"/>
    </location>
    <ligand>
        <name>K(+)</name>
        <dbReference type="ChEBI" id="CHEBI:29103"/>
    </ligand>
</feature>
<feature type="binding site" evidence="1">
    <location>
        <begin position="120"/>
        <end position="126"/>
    </location>
    <ligand>
        <name>(6S)-NADPHX</name>
        <dbReference type="ChEBI" id="CHEBI:64076"/>
    </ligand>
</feature>
<feature type="binding site" evidence="1">
    <location>
        <position position="149"/>
    </location>
    <ligand>
        <name>(6S)-NADPHX</name>
        <dbReference type="ChEBI" id="CHEBI:64076"/>
    </ligand>
</feature>
<feature type="binding site" evidence="1">
    <location>
        <position position="152"/>
    </location>
    <ligand>
        <name>K(+)</name>
        <dbReference type="ChEBI" id="CHEBI:29103"/>
    </ligand>
</feature>
<name>NNRE_TRURR</name>
<protein>
    <recommendedName>
        <fullName evidence="1">NAD(P)H-hydrate epimerase</fullName>
        <ecNumber evidence="1">5.1.99.6</ecNumber>
    </recommendedName>
    <alternativeName>
        <fullName evidence="1">NAD(P)HX epimerase</fullName>
    </alternativeName>
</protein>
<gene>
    <name evidence="1" type="primary">nnrE</name>
    <name type="ordered locus">Trad_1376</name>
</gene>
<keyword id="KW-0413">Isomerase</keyword>
<keyword id="KW-0479">Metal-binding</keyword>
<keyword id="KW-0520">NAD</keyword>
<keyword id="KW-0521">NADP</keyword>
<keyword id="KW-0547">Nucleotide-binding</keyword>
<keyword id="KW-0630">Potassium</keyword>
<keyword id="KW-1185">Reference proteome</keyword>
<evidence type="ECO:0000255" key="1">
    <source>
        <dbReference type="HAMAP-Rule" id="MF_01966"/>
    </source>
</evidence>
<reference key="1">
    <citation type="submission" date="2010-05" db="EMBL/GenBank/DDBJ databases">
        <title>The complete genome of Truepera radiovictris DSM 17093.</title>
        <authorList>
            <consortium name="US DOE Joint Genome Institute (JGI-PGF)"/>
            <person name="Lucas S."/>
            <person name="Copeland A."/>
            <person name="Lapidus A."/>
            <person name="Glavina del Rio T."/>
            <person name="Dalin E."/>
            <person name="Tice H."/>
            <person name="Bruce D."/>
            <person name="Goodwin L."/>
            <person name="Pitluck S."/>
            <person name="Kyrpides N."/>
            <person name="Mavromatis K."/>
            <person name="Ovchinnikova G."/>
            <person name="Munk A.C."/>
            <person name="Detter J.C."/>
            <person name="Han C."/>
            <person name="Tapia R."/>
            <person name="Land M."/>
            <person name="Hauser L."/>
            <person name="Markowitz V."/>
            <person name="Cheng J.-F."/>
            <person name="Hugenholtz P."/>
            <person name="Woyke T."/>
            <person name="Wu D."/>
            <person name="Tindall B."/>
            <person name="Pomrenke H.G."/>
            <person name="Brambilla E."/>
            <person name="Klenk H.-P."/>
            <person name="Eisen J.A."/>
        </authorList>
    </citation>
    <scope>NUCLEOTIDE SEQUENCE [LARGE SCALE GENOMIC DNA]</scope>
    <source>
        <strain>DSM 17093 / CIP 108686 / LMG 22925 / RQ-24</strain>
    </source>
</reference>
<comment type="function">
    <text evidence="1">Catalyzes the epimerization of the S- and R-forms of NAD(P)HX, a damaged form of NAD(P)H that is a result of enzymatic or heat-dependent hydration. This is a prerequisite for the S-specific NAD(P)H-hydrate dehydratase to allow the repair of both epimers of NAD(P)HX.</text>
</comment>
<comment type="catalytic activity">
    <reaction evidence="1">
        <text>(6R)-NADHX = (6S)-NADHX</text>
        <dbReference type="Rhea" id="RHEA:32215"/>
        <dbReference type="ChEBI" id="CHEBI:64074"/>
        <dbReference type="ChEBI" id="CHEBI:64075"/>
        <dbReference type="EC" id="5.1.99.6"/>
    </reaction>
</comment>
<comment type="catalytic activity">
    <reaction evidence="1">
        <text>(6R)-NADPHX = (6S)-NADPHX</text>
        <dbReference type="Rhea" id="RHEA:32227"/>
        <dbReference type="ChEBI" id="CHEBI:64076"/>
        <dbReference type="ChEBI" id="CHEBI:64077"/>
        <dbReference type="EC" id="5.1.99.6"/>
    </reaction>
</comment>
<comment type="cofactor">
    <cofactor evidence="1">
        <name>K(+)</name>
        <dbReference type="ChEBI" id="CHEBI:29103"/>
    </cofactor>
    <text evidence="1">Binds 1 potassium ion per subunit.</text>
</comment>
<comment type="similarity">
    <text evidence="1">Belongs to the NnrE/AIBP family.</text>
</comment>
<accession>D7CWZ0</accession>
<dbReference type="EC" id="5.1.99.6" evidence="1"/>
<dbReference type="EMBL" id="CP002049">
    <property type="protein sequence ID" value="ADI14498.1"/>
    <property type="molecule type" value="Genomic_DNA"/>
</dbReference>
<dbReference type="SMR" id="D7CWZ0"/>
<dbReference type="STRING" id="649638.Trad_1376"/>
<dbReference type="KEGG" id="tra:Trad_1376"/>
<dbReference type="eggNOG" id="COG0062">
    <property type="taxonomic scope" value="Bacteria"/>
</dbReference>
<dbReference type="HOGENOM" id="CLU_024853_0_1_0"/>
<dbReference type="Proteomes" id="UP000000379">
    <property type="component" value="Chromosome"/>
</dbReference>
<dbReference type="GO" id="GO:0046872">
    <property type="term" value="F:metal ion binding"/>
    <property type="evidence" value="ECO:0007669"/>
    <property type="project" value="UniProtKB-KW"/>
</dbReference>
<dbReference type="GO" id="GO:0052856">
    <property type="term" value="F:NAD(P)HX epimerase activity"/>
    <property type="evidence" value="ECO:0007669"/>
    <property type="project" value="UniProtKB-UniRule"/>
</dbReference>
<dbReference type="GO" id="GO:0000166">
    <property type="term" value="F:nucleotide binding"/>
    <property type="evidence" value="ECO:0007669"/>
    <property type="project" value="UniProtKB-KW"/>
</dbReference>
<dbReference type="Gene3D" id="3.40.50.10260">
    <property type="entry name" value="YjeF N-terminal domain"/>
    <property type="match status" value="1"/>
</dbReference>
<dbReference type="HAMAP" id="MF_01966">
    <property type="entry name" value="NADHX_epimerase"/>
    <property type="match status" value="1"/>
</dbReference>
<dbReference type="InterPro" id="IPR004443">
    <property type="entry name" value="YjeF_N_dom"/>
</dbReference>
<dbReference type="InterPro" id="IPR036652">
    <property type="entry name" value="YjeF_N_dom_sf"/>
</dbReference>
<dbReference type="Pfam" id="PF03853">
    <property type="entry name" value="YjeF_N"/>
    <property type="match status" value="1"/>
</dbReference>
<dbReference type="SUPFAM" id="SSF64153">
    <property type="entry name" value="YjeF N-terminal domain-like"/>
    <property type="match status" value="1"/>
</dbReference>
<dbReference type="PROSITE" id="PS51385">
    <property type="entry name" value="YJEF_N"/>
    <property type="match status" value="1"/>
</dbReference>
<proteinExistence type="inferred from homology"/>
<sequence>MSAAQARHLTTLATGRYGFELQTLMERAGESLAGLAAHLAPDGPVLVVAGRGHNGGVGLAAAHCLARARRAVWVVPTHEAENYSGVPKELLERLAELPNVRLRSSLPKMKFSCALDAAVGMRLEGPPRGRTLDVITVLNNLGCKVLSLDVPTGLAADSGEVPGDVVRASATLALALPKPGTPPGGVVGDLYLASFDLPEALFHDVGLEPFVAPSPWARIV</sequence>
<organism>
    <name type="scientific">Truepera radiovictrix (strain DSM 17093 / CIP 108686 / LMG 22925 / RQ-24)</name>
    <dbReference type="NCBI Taxonomy" id="649638"/>
    <lineage>
        <taxon>Bacteria</taxon>
        <taxon>Thermotogati</taxon>
        <taxon>Deinococcota</taxon>
        <taxon>Deinococci</taxon>
        <taxon>Trueperales</taxon>
        <taxon>Trueperaceae</taxon>
        <taxon>Truepera</taxon>
    </lineage>
</organism>